<organism>
    <name type="scientific">Arabidopsis thaliana</name>
    <name type="common">Mouse-ear cress</name>
    <dbReference type="NCBI Taxonomy" id="3702"/>
    <lineage>
        <taxon>Eukaryota</taxon>
        <taxon>Viridiplantae</taxon>
        <taxon>Streptophyta</taxon>
        <taxon>Embryophyta</taxon>
        <taxon>Tracheophyta</taxon>
        <taxon>Spermatophyta</taxon>
        <taxon>Magnoliopsida</taxon>
        <taxon>eudicotyledons</taxon>
        <taxon>Gunneridae</taxon>
        <taxon>Pentapetalae</taxon>
        <taxon>rosids</taxon>
        <taxon>malvids</taxon>
        <taxon>Brassicales</taxon>
        <taxon>Brassicaceae</taxon>
        <taxon>Camelineae</taxon>
        <taxon>Arabidopsis</taxon>
    </lineage>
</organism>
<reference key="1">
    <citation type="submission" date="2002-05" db="EMBL/GenBank/DDBJ databases">
        <title>Molecular cloning of cytochrome b-561D from Arabidopsis thaliana.</title>
        <authorList>
            <person name="Sparla F."/>
            <person name="Preger V."/>
            <person name="Trost P."/>
        </authorList>
    </citation>
    <scope>NUCLEOTIDE SEQUENCE [MRNA]</scope>
</reference>
<reference key="2">
    <citation type="journal article" date="2000" name="Nature">
        <title>Sequence and analysis of chromosome 1 of the plant Arabidopsis thaliana.</title>
        <authorList>
            <person name="Theologis A."/>
            <person name="Ecker J.R."/>
            <person name="Palm C.J."/>
            <person name="Federspiel N.A."/>
            <person name="Kaul S."/>
            <person name="White O."/>
            <person name="Alonso J."/>
            <person name="Altafi H."/>
            <person name="Araujo R."/>
            <person name="Bowman C.L."/>
            <person name="Brooks S.Y."/>
            <person name="Buehler E."/>
            <person name="Chan A."/>
            <person name="Chao Q."/>
            <person name="Chen H."/>
            <person name="Cheuk R.F."/>
            <person name="Chin C.W."/>
            <person name="Chung M.K."/>
            <person name="Conn L."/>
            <person name="Conway A.B."/>
            <person name="Conway A.R."/>
            <person name="Creasy T.H."/>
            <person name="Dewar K."/>
            <person name="Dunn P."/>
            <person name="Etgu P."/>
            <person name="Feldblyum T.V."/>
            <person name="Feng J.-D."/>
            <person name="Fong B."/>
            <person name="Fujii C.Y."/>
            <person name="Gill J.E."/>
            <person name="Goldsmith A.D."/>
            <person name="Haas B."/>
            <person name="Hansen N.F."/>
            <person name="Hughes B."/>
            <person name="Huizar L."/>
            <person name="Hunter J.L."/>
            <person name="Jenkins J."/>
            <person name="Johnson-Hopson C."/>
            <person name="Khan S."/>
            <person name="Khaykin E."/>
            <person name="Kim C.J."/>
            <person name="Koo H.L."/>
            <person name="Kremenetskaia I."/>
            <person name="Kurtz D.B."/>
            <person name="Kwan A."/>
            <person name="Lam B."/>
            <person name="Langin-Hooper S."/>
            <person name="Lee A."/>
            <person name="Lee J.M."/>
            <person name="Lenz C.A."/>
            <person name="Li J.H."/>
            <person name="Li Y.-P."/>
            <person name="Lin X."/>
            <person name="Liu S.X."/>
            <person name="Liu Z.A."/>
            <person name="Luros J.S."/>
            <person name="Maiti R."/>
            <person name="Marziali A."/>
            <person name="Militscher J."/>
            <person name="Miranda M."/>
            <person name="Nguyen M."/>
            <person name="Nierman W.C."/>
            <person name="Osborne B.I."/>
            <person name="Pai G."/>
            <person name="Peterson J."/>
            <person name="Pham P.K."/>
            <person name="Rizzo M."/>
            <person name="Rooney T."/>
            <person name="Rowley D."/>
            <person name="Sakano H."/>
            <person name="Salzberg S.L."/>
            <person name="Schwartz J.R."/>
            <person name="Shinn P."/>
            <person name="Southwick A.M."/>
            <person name="Sun H."/>
            <person name="Tallon L.J."/>
            <person name="Tambunga G."/>
            <person name="Toriumi M.J."/>
            <person name="Town C.D."/>
            <person name="Utterback T."/>
            <person name="Van Aken S."/>
            <person name="Vaysberg M."/>
            <person name="Vysotskaia V.S."/>
            <person name="Walker M."/>
            <person name="Wu D."/>
            <person name="Yu G."/>
            <person name="Fraser C.M."/>
            <person name="Venter J.C."/>
            <person name="Davis R.W."/>
        </authorList>
    </citation>
    <scope>NUCLEOTIDE SEQUENCE [LARGE SCALE GENOMIC DNA]</scope>
    <source>
        <strain>cv. Columbia</strain>
    </source>
</reference>
<reference key="3">
    <citation type="journal article" date="2017" name="Plant J.">
        <title>Araport11: a complete reannotation of the Arabidopsis thaliana reference genome.</title>
        <authorList>
            <person name="Cheng C.Y."/>
            <person name="Krishnakumar V."/>
            <person name="Chan A.P."/>
            <person name="Thibaud-Nissen F."/>
            <person name="Schobel S."/>
            <person name="Town C.D."/>
        </authorList>
    </citation>
    <scope>GENOME REANNOTATION</scope>
    <source>
        <strain>cv. Columbia</strain>
    </source>
</reference>
<reference key="4">
    <citation type="submission" date="2006-02" db="EMBL/GenBank/DDBJ databases">
        <title>Arabidopsis ORF clones.</title>
        <authorList>
            <person name="Shinn P."/>
            <person name="Chen H."/>
            <person name="Kim C.J."/>
            <person name="Ecker J.R."/>
        </authorList>
    </citation>
    <scope>NUCLEOTIDE SEQUENCE [LARGE SCALE MRNA]</scope>
</reference>
<reference key="5">
    <citation type="journal article" date="2001" name="Protoplasma">
        <title>Higher-plant plasma membrane cytochrome b561: a protein in search of a function.</title>
        <authorList>
            <person name="Asard H."/>
            <person name="Kapila J."/>
            <person name="Verelst W."/>
            <person name="Berczi A."/>
        </authorList>
    </citation>
    <scope>GENE FAMILY</scope>
    <scope>NOMENCLATURE</scope>
</reference>
<reference key="6">
    <citation type="journal article" date="2004" name="Physiol. Plantarum">
        <title>Tissue-specific expression and developmental regulation of cytochrome b561 genes in Arabidopsis thaliana and Raphanus sativus.</title>
        <authorList>
            <person name="Verelst W."/>
            <person name="Kapila J."/>
            <person name="De Almeida Engler J."/>
            <person name="Stone J.M."/>
            <person name="Caubergs R."/>
            <person name="Asard H."/>
        </authorList>
    </citation>
    <scope>IDENTIFICATION</scope>
    <scope>NOMENCLATURE</scope>
</reference>
<reference key="7">
    <citation type="journal article" date="2005" name="Biochim. Biophys. Acta">
        <title>Cytochrome b561 protein family: expanding roles and versatile transmembrane electron transfer abilities as predicted by a new classification system and protein sequence motif analyses.</title>
        <authorList>
            <person name="Tsubaki M."/>
            <person name="Takeuchi F."/>
            <person name="Nakanishi N."/>
        </authorList>
    </citation>
    <scope>GENE FAMILY</scope>
    <scope>NOMENCLATURE</scope>
</reference>
<reference key="8">
    <citation type="journal article" date="2013" name="Antioxid. Redox Signal.">
        <title>Cytochromes b561: ascorbate-mediated trans-membrane electron transport.</title>
        <authorList>
            <person name="Asard H."/>
            <person name="Barbaro R."/>
            <person name="Trost P."/>
            <person name="Berczi A."/>
        </authorList>
    </citation>
    <scope>REVIEW</scope>
</reference>
<dbReference type="EC" id="7.2.1.3" evidence="2"/>
<dbReference type="EMBL" id="AY114120">
    <property type="protein sequence ID" value="AAM63528.1"/>
    <property type="molecule type" value="mRNA"/>
</dbReference>
<dbReference type="EMBL" id="AC079829">
    <property type="protein sequence ID" value="AAG50673.1"/>
    <property type="molecule type" value="Genomic_DNA"/>
</dbReference>
<dbReference type="EMBL" id="AC084221">
    <property type="protein sequence ID" value="AAG50524.1"/>
    <property type="molecule type" value="Genomic_DNA"/>
</dbReference>
<dbReference type="EMBL" id="CP002684">
    <property type="protein sequence ID" value="AEE30648.1"/>
    <property type="molecule type" value="Genomic_DNA"/>
</dbReference>
<dbReference type="EMBL" id="BT024618">
    <property type="protein sequence ID" value="ABD43016.1"/>
    <property type="molecule type" value="mRNA"/>
</dbReference>
<dbReference type="PIR" id="A86387">
    <property type="entry name" value="A86387"/>
</dbReference>
<dbReference type="RefSeq" id="NP_173935.1">
    <property type="nucleotide sequence ID" value="NM_102375.3"/>
</dbReference>
<dbReference type="SMR" id="Q9C540"/>
<dbReference type="FunCoup" id="Q9C540">
    <property type="interactions" value="326"/>
</dbReference>
<dbReference type="STRING" id="3702.Q9C540"/>
<dbReference type="PaxDb" id="3702-AT1G26100.1"/>
<dbReference type="ProteomicsDB" id="244524"/>
<dbReference type="EnsemblPlants" id="AT1G26100.1">
    <property type="protein sequence ID" value="AT1G26100.1"/>
    <property type="gene ID" value="AT1G26100"/>
</dbReference>
<dbReference type="GeneID" id="839151"/>
<dbReference type="Gramene" id="AT1G26100.1">
    <property type="protein sequence ID" value="AT1G26100.1"/>
    <property type="gene ID" value="AT1G26100"/>
</dbReference>
<dbReference type="KEGG" id="ath:AT1G26100"/>
<dbReference type="Araport" id="AT1G26100"/>
<dbReference type="TAIR" id="AT1G26100"/>
<dbReference type="eggNOG" id="KOG1619">
    <property type="taxonomic scope" value="Eukaryota"/>
</dbReference>
<dbReference type="HOGENOM" id="CLU_069712_0_1_1"/>
<dbReference type="InParanoid" id="Q9C540"/>
<dbReference type="OMA" id="TPNGIDM"/>
<dbReference type="OrthoDB" id="907479at2759"/>
<dbReference type="PhylomeDB" id="Q9C540"/>
<dbReference type="PRO" id="PR:Q9C540"/>
<dbReference type="Proteomes" id="UP000006548">
    <property type="component" value="Chromosome 1"/>
</dbReference>
<dbReference type="ExpressionAtlas" id="Q9C540">
    <property type="expression patterns" value="baseline and differential"/>
</dbReference>
<dbReference type="GO" id="GO:0016020">
    <property type="term" value="C:membrane"/>
    <property type="evidence" value="ECO:0007669"/>
    <property type="project" value="UniProtKB-SubCell"/>
</dbReference>
<dbReference type="GO" id="GO:0046872">
    <property type="term" value="F:metal ion binding"/>
    <property type="evidence" value="ECO:0007669"/>
    <property type="project" value="UniProtKB-KW"/>
</dbReference>
<dbReference type="GO" id="GO:0140571">
    <property type="term" value="F:transmembrane ascorbate ferrireductase activity"/>
    <property type="evidence" value="ECO:0007669"/>
    <property type="project" value="UniProtKB-EC"/>
</dbReference>
<dbReference type="CDD" id="cd08766">
    <property type="entry name" value="Cyt_b561_ACYB-1_like"/>
    <property type="match status" value="1"/>
</dbReference>
<dbReference type="FunFam" id="1.20.120.1770:FF:000001">
    <property type="entry name" value="Cytochrome b reductase 1"/>
    <property type="match status" value="1"/>
</dbReference>
<dbReference type="Gene3D" id="1.20.120.1770">
    <property type="match status" value="1"/>
</dbReference>
<dbReference type="InterPro" id="IPR043205">
    <property type="entry name" value="CYB561/CYBRD1-like"/>
</dbReference>
<dbReference type="InterPro" id="IPR006593">
    <property type="entry name" value="Cyt_b561/ferric_Rdtase_TM"/>
</dbReference>
<dbReference type="PANTHER" id="PTHR10106">
    <property type="entry name" value="CYTOCHROME B561-RELATED"/>
    <property type="match status" value="1"/>
</dbReference>
<dbReference type="PANTHER" id="PTHR10106:SF41">
    <property type="entry name" value="TRANSMEMBRANE ASCORBATE FERRIREDUCTASE 4-RELATED"/>
    <property type="match status" value="1"/>
</dbReference>
<dbReference type="Pfam" id="PF03188">
    <property type="entry name" value="Cytochrom_B561"/>
    <property type="match status" value="1"/>
</dbReference>
<dbReference type="SMART" id="SM00665">
    <property type="entry name" value="B561"/>
    <property type="match status" value="1"/>
</dbReference>
<dbReference type="PROSITE" id="PS50939">
    <property type="entry name" value="CYTOCHROME_B561"/>
    <property type="match status" value="1"/>
</dbReference>
<feature type="chain" id="PRO_0000412910" description="Probable transmembrane ascorbate ferrireductase 4">
    <location>
        <begin position="1"/>
        <end position="236"/>
    </location>
</feature>
<feature type="transmembrane region" description="Helical; Name=1" evidence="4">
    <location>
        <begin position="17"/>
        <end position="37"/>
    </location>
</feature>
<feature type="transmembrane region" description="Helical; Name=2" evidence="4">
    <location>
        <begin position="42"/>
        <end position="62"/>
    </location>
</feature>
<feature type="transmembrane region" description="Helical; Name=3" evidence="4">
    <location>
        <begin position="76"/>
        <end position="96"/>
    </location>
</feature>
<feature type="transmembrane region" description="Helical; Name=4" evidence="4">
    <location>
        <begin position="112"/>
        <end position="132"/>
    </location>
</feature>
<feature type="transmembrane region" description="Helical; Name=5" evidence="4">
    <location>
        <begin position="144"/>
        <end position="164"/>
    </location>
</feature>
<feature type="transmembrane region" description="Helical; Name=6" evidence="4">
    <location>
        <begin position="191"/>
        <end position="211"/>
    </location>
</feature>
<feature type="domain" description="Cytochrome b561" evidence="5">
    <location>
        <begin position="14"/>
        <end position="210"/>
    </location>
</feature>
<feature type="binding site" description="axial binding residue" evidence="3">
    <location>
        <position position="44"/>
    </location>
    <ligand>
        <name>heme b</name>
        <dbReference type="ChEBI" id="CHEBI:60344"/>
        <label>1</label>
    </ligand>
    <ligandPart>
        <name>Fe</name>
        <dbReference type="ChEBI" id="CHEBI:18248"/>
    </ligandPart>
</feature>
<feature type="binding site" description="axial binding residue" evidence="3">
    <location>
        <position position="77"/>
    </location>
    <ligand>
        <name>heme b</name>
        <dbReference type="ChEBI" id="CHEBI:60344"/>
        <label>2</label>
    </ligand>
    <ligandPart>
        <name>Fe</name>
        <dbReference type="ChEBI" id="CHEBI:18248"/>
    </ligandPart>
</feature>
<feature type="binding site" description="axial binding residue" evidence="3">
    <location>
        <position position="110"/>
    </location>
    <ligand>
        <name>heme b</name>
        <dbReference type="ChEBI" id="CHEBI:60344"/>
        <label>1</label>
    </ligand>
    <ligandPart>
        <name>Fe</name>
        <dbReference type="ChEBI" id="CHEBI:18248"/>
    </ligandPart>
</feature>
<feature type="binding site" description="axial binding residue" evidence="3">
    <location>
        <position position="149"/>
    </location>
    <ligand>
        <name>heme b</name>
        <dbReference type="ChEBI" id="CHEBI:60344"/>
        <label>2</label>
    </ligand>
    <ligandPart>
        <name>Fe</name>
        <dbReference type="ChEBI" id="CHEBI:18248"/>
    </ligandPart>
</feature>
<comment type="function">
    <text evidence="1">Two-heme-containing cytochrome. May catalyze ascorbate-dependent trans-membrane ferric-chelate reduction (By similarity).</text>
</comment>
<comment type="catalytic activity">
    <reaction evidence="2">
        <text>Fe(3+)(out) + L-ascorbate(in) = monodehydro-L-ascorbate radical(in) + Fe(2+)(out) + H(+)</text>
        <dbReference type="Rhea" id="RHEA:30403"/>
        <dbReference type="ChEBI" id="CHEBI:15378"/>
        <dbReference type="ChEBI" id="CHEBI:29033"/>
        <dbReference type="ChEBI" id="CHEBI:29034"/>
        <dbReference type="ChEBI" id="CHEBI:38290"/>
        <dbReference type="ChEBI" id="CHEBI:59513"/>
        <dbReference type="EC" id="7.2.1.3"/>
    </reaction>
</comment>
<comment type="cofactor">
    <cofactor evidence="3">
        <name>heme b</name>
        <dbReference type="ChEBI" id="CHEBI:60344"/>
    </cofactor>
    <text evidence="3">Binds 2 heme b groups non-covalently.</text>
</comment>
<comment type="subunit">
    <text evidence="3">Homodimer.</text>
</comment>
<comment type="subcellular location">
    <subcellularLocation>
        <location evidence="2">Membrane</location>
        <topology evidence="2">Multi-pass membrane protein</topology>
    </subcellularLocation>
</comment>
<name>ACFR4_ARATH</name>
<gene>
    <name type="primary">CYB561D</name>
    <name type="ordered locus">At1g26100</name>
    <name type="ORF">F14G11.7</name>
    <name type="ORF">F28B23.22</name>
</gene>
<sequence length="236" mass="26307">MGSVDPSRLSLVLFARLSGLVVAVSVLYWALFLPNLGLSYSTLHPLLMVIGFILVSGEAILIHRWLPGSRKTKKAVHLWLQGMALASAVFGIWTKFHYQRGVFANFYSLHSWMGLLSVSLFAAQWVTGFMSFWHRGEVRTTRTTFLPWHVFLGLYTYGLAIATAETGLLEKLTFLQTKRNVPRRGSESMTVNGLGLGLALLGCIVITAAILPKYQSHSRDEKLVYSSQDRPKCLSS</sequence>
<proteinExistence type="evidence at transcript level"/>
<keyword id="KW-0249">Electron transport</keyword>
<keyword id="KW-0349">Heme</keyword>
<keyword id="KW-0408">Iron</keyword>
<keyword id="KW-0472">Membrane</keyword>
<keyword id="KW-0479">Metal-binding</keyword>
<keyword id="KW-1185">Reference proteome</keyword>
<keyword id="KW-1278">Translocase</keyword>
<keyword id="KW-0812">Transmembrane</keyword>
<keyword id="KW-1133">Transmembrane helix</keyword>
<keyword id="KW-0813">Transport</keyword>
<evidence type="ECO:0000250" key="1"/>
<evidence type="ECO:0000250" key="2">
    <source>
        <dbReference type="UniProtKB" id="Q8L856"/>
    </source>
</evidence>
<evidence type="ECO:0000250" key="3">
    <source>
        <dbReference type="UniProtKB" id="Q9SWS1"/>
    </source>
</evidence>
<evidence type="ECO:0000255" key="4"/>
<evidence type="ECO:0000255" key="5">
    <source>
        <dbReference type="PROSITE-ProRule" id="PRU00242"/>
    </source>
</evidence>
<accession>Q9C540</accession>
<protein>
    <recommendedName>
        <fullName>Probable transmembrane ascorbate ferrireductase 4</fullName>
        <ecNumber evidence="2">7.2.1.3</ecNumber>
    </recommendedName>
    <alternativeName>
        <fullName>Artb561-4</fullName>
    </alternativeName>
    <alternativeName>
        <fullName>Cytochrome b-561D</fullName>
    </alternativeName>
    <alternativeName>
        <fullName>Protein b561A.tha6</fullName>
    </alternativeName>
</protein>